<accession>Q3SYW5</accession>
<feature type="chain" id="PRO_0000280601" description="5-azacytidine-induced protein 2">
    <location>
        <begin position="1"/>
        <end position="393"/>
    </location>
</feature>
<feature type="region of interest" description="Homodimerization" evidence="1">
    <location>
        <begin position="1"/>
        <end position="198"/>
    </location>
</feature>
<feature type="region of interest" description="Interaction with TBK1 and IKBKE" evidence="1">
    <location>
        <begin position="217"/>
        <end position="258"/>
    </location>
</feature>
<feature type="region of interest" description="Disordered" evidence="6">
    <location>
        <begin position="321"/>
        <end position="340"/>
    </location>
</feature>
<feature type="region of interest" description="Disordered" evidence="6">
    <location>
        <begin position="345"/>
        <end position="393"/>
    </location>
</feature>
<feature type="coiled-coil region" evidence="5">
    <location>
        <begin position="40"/>
        <end position="198"/>
    </location>
</feature>
<feature type="compositionally biased region" description="Polar residues" evidence="6">
    <location>
        <begin position="384"/>
        <end position="393"/>
    </location>
</feature>
<feature type="modified residue" description="Phosphoserine" evidence="2">
    <location>
        <position position="319"/>
    </location>
</feature>
<feature type="modified residue" description="Phosphoserine" evidence="3">
    <location>
        <position position="354"/>
    </location>
</feature>
<dbReference type="EMBL" id="BC103353">
    <property type="protein sequence ID" value="AAI03354.1"/>
    <property type="molecule type" value="mRNA"/>
</dbReference>
<dbReference type="RefSeq" id="NP_001070473.1">
    <property type="nucleotide sequence ID" value="NM_001077005.2"/>
</dbReference>
<dbReference type="RefSeq" id="XP_015314944.1">
    <property type="nucleotide sequence ID" value="XM_015459458.1"/>
</dbReference>
<dbReference type="SMR" id="Q3SYW5"/>
<dbReference type="FunCoup" id="Q3SYW5">
    <property type="interactions" value="2113"/>
</dbReference>
<dbReference type="STRING" id="9913.ENSBTAP00000005379"/>
<dbReference type="PaxDb" id="9913-ENSBTAP00000005379"/>
<dbReference type="Ensembl" id="ENSBTAT00000005379.6">
    <property type="protein sequence ID" value="ENSBTAP00000005379.5"/>
    <property type="gene ID" value="ENSBTAG00000004117.6"/>
</dbReference>
<dbReference type="GeneID" id="767932"/>
<dbReference type="KEGG" id="bta:767932"/>
<dbReference type="CTD" id="64343"/>
<dbReference type="VEuPathDB" id="HostDB:ENSBTAG00000004117"/>
<dbReference type="VGNC" id="VGNC:26368">
    <property type="gene designation" value="AZI2"/>
</dbReference>
<dbReference type="eggNOG" id="ENOG502QV07">
    <property type="taxonomic scope" value="Eukaryota"/>
</dbReference>
<dbReference type="GeneTree" id="ENSGT00940000153704"/>
<dbReference type="HOGENOM" id="CLU_059745_0_0_1"/>
<dbReference type="InParanoid" id="Q3SYW5"/>
<dbReference type="OMA" id="PWPSQSC"/>
<dbReference type="OrthoDB" id="8744179at2759"/>
<dbReference type="TreeFam" id="TF331289"/>
<dbReference type="Proteomes" id="UP000009136">
    <property type="component" value="Chromosome 22"/>
</dbReference>
<dbReference type="Bgee" id="ENSBTAG00000004117">
    <property type="expression patterns" value="Expressed in oviduct epithelium and 109 other cell types or tissues"/>
</dbReference>
<dbReference type="GO" id="GO:0005737">
    <property type="term" value="C:cytoplasm"/>
    <property type="evidence" value="ECO:0000318"/>
    <property type="project" value="GO_Central"/>
</dbReference>
<dbReference type="GO" id="GO:0097028">
    <property type="term" value="P:dendritic cell differentiation"/>
    <property type="evidence" value="ECO:0007669"/>
    <property type="project" value="Ensembl"/>
</dbReference>
<dbReference type="GO" id="GO:0044565">
    <property type="term" value="P:dendritic cell proliferation"/>
    <property type="evidence" value="ECO:0007669"/>
    <property type="project" value="Ensembl"/>
</dbReference>
<dbReference type="GO" id="GO:0000278">
    <property type="term" value="P:mitotic cell cycle"/>
    <property type="evidence" value="ECO:0007669"/>
    <property type="project" value="Ensembl"/>
</dbReference>
<dbReference type="GO" id="GO:0043124">
    <property type="term" value="P:negative regulation of canonical NF-kappaB signal transduction"/>
    <property type="evidence" value="ECO:0007669"/>
    <property type="project" value="Ensembl"/>
</dbReference>
<dbReference type="GO" id="GO:0042110">
    <property type="term" value="P:T cell activation"/>
    <property type="evidence" value="ECO:0007669"/>
    <property type="project" value="Ensembl"/>
</dbReference>
<dbReference type="InterPro" id="IPR024581">
    <property type="entry name" value="TBD"/>
</dbReference>
<dbReference type="InterPro" id="IPR051891">
    <property type="entry name" value="TBK1-IKBKE_adapters"/>
</dbReference>
<dbReference type="PANTHER" id="PTHR14432:SF6">
    <property type="entry name" value="5-AZACYTIDINE-INDUCED PROTEIN 2"/>
    <property type="match status" value="1"/>
</dbReference>
<dbReference type="PANTHER" id="PTHR14432">
    <property type="entry name" value="PROSAPIP2 PROTEIN/5-AZACYTIDINE INDUCED GENE 2"/>
    <property type="match status" value="1"/>
</dbReference>
<dbReference type="Pfam" id="PF12845">
    <property type="entry name" value="TBD"/>
    <property type="match status" value="1"/>
</dbReference>
<organism>
    <name type="scientific">Bos taurus</name>
    <name type="common">Bovine</name>
    <dbReference type="NCBI Taxonomy" id="9913"/>
    <lineage>
        <taxon>Eukaryota</taxon>
        <taxon>Metazoa</taxon>
        <taxon>Chordata</taxon>
        <taxon>Craniata</taxon>
        <taxon>Vertebrata</taxon>
        <taxon>Euteleostomi</taxon>
        <taxon>Mammalia</taxon>
        <taxon>Eutheria</taxon>
        <taxon>Laurasiatheria</taxon>
        <taxon>Artiodactyla</taxon>
        <taxon>Ruminantia</taxon>
        <taxon>Pecora</taxon>
        <taxon>Bovidae</taxon>
        <taxon>Bovinae</taxon>
        <taxon>Bos</taxon>
    </lineage>
</organism>
<reference key="1">
    <citation type="submission" date="2005-08" db="EMBL/GenBank/DDBJ databases">
        <authorList>
            <consortium name="NIH - Mammalian Gene Collection (MGC) project"/>
        </authorList>
    </citation>
    <scope>NUCLEOTIDE SEQUENCE [LARGE SCALE MRNA]</scope>
    <source>
        <strain>Crossbred X Angus</strain>
        <tissue>Ileum</tissue>
    </source>
</reference>
<comment type="function">
    <text evidence="3">Adapter protein which binds TBK1 and IKBKE playing a role in antiviral innate immunity (By similarity). Activates serine/threonine-protein kinase TBK1 and facilitates its oligomerization (By similarity). Enhances the phosphorylation of NF-kappa-B p65 subunit RELA by TBK1 (By similarity). Promotes TBK1-induced as well as TNF-alpha or PMA-induced activation of NF-kappa-B (By similarity). Participates in IFNB promoter activation via TICAM1 (By similarity).</text>
</comment>
<comment type="subunit">
    <text evidence="3 4">Homodimer (By similarity). Interacts with IKBKE, TBK1 and TICAM1 (By similarity). Interacts with TAX1BP1 (By similarity). Interacts with CALCOCO2 (By similarity).</text>
</comment>
<comment type="subcellular location">
    <subcellularLocation>
        <location evidence="3">Cytoplasm</location>
    </subcellularLocation>
</comment>
<comment type="PTM">
    <text evidence="4">Ubiquitinated via 'Lys-48'-linked polyubiquitination by TRIM38, leading to its degradation.</text>
</comment>
<gene>
    <name type="primary">AZI2</name>
</gene>
<name>AZI2_BOVIN</name>
<keyword id="KW-0175">Coiled coil</keyword>
<keyword id="KW-0963">Cytoplasm</keyword>
<keyword id="KW-0597">Phosphoprotein</keyword>
<keyword id="KW-1185">Reference proteome</keyword>
<keyword id="KW-0832">Ubl conjugation</keyword>
<sequence length="393" mass="44917">MDALVEDDICILNHEKAHRRDPVTPVSIYSGDESVASHFALVTAYEDIKKRLKDSEKENSFLKKRIRILEEKLIGARKDEETSSVGREQVNKAYHAYREVCIDRDNLKSKLDKMNKDNSESLKVLNEQLQSKEVELLQLRTEVETQQVIRNLNPPSSNWEVEKLSCDLKIHGLEQELELLRKECRDLRIELQKAKQTDPSLDDNLNCRDLQRLSVSSDNMQSAYWELKREMSNLHLVTQVQAELLRKLKTPAAIKKACAPAGCMEDLGKDSTKLHLSNFTAAYKRHAPLSPNGKTLCHATPSPLPGDAKVLSEKAALQSWTDHERSIPHDGTNFQEHNSYSRNSLEDNSWVFPSPPKSSETTFGEMKSKPLPLPNLPPLHYLDQHNQNCHYKH</sequence>
<proteinExistence type="evidence at transcript level"/>
<evidence type="ECO:0000250" key="1"/>
<evidence type="ECO:0000250" key="2">
    <source>
        <dbReference type="UniProtKB" id="Q4KMA0"/>
    </source>
</evidence>
<evidence type="ECO:0000250" key="3">
    <source>
        <dbReference type="UniProtKB" id="Q9H6S1"/>
    </source>
</evidence>
<evidence type="ECO:0000250" key="4">
    <source>
        <dbReference type="UniProtKB" id="Q9QYP6"/>
    </source>
</evidence>
<evidence type="ECO:0000255" key="5"/>
<evidence type="ECO:0000256" key="6">
    <source>
        <dbReference type="SAM" id="MobiDB-lite"/>
    </source>
</evidence>
<protein>
    <recommendedName>
        <fullName>5-azacytidine-induced protein 2</fullName>
    </recommendedName>
</protein>